<dbReference type="EMBL" id="AY237134">
    <property type="protein sequence ID" value="AAQ64539.1"/>
    <property type="molecule type" value="Genomic_DNA"/>
</dbReference>
<dbReference type="SMR" id="Q6EMA2"/>
<dbReference type="GO" id="GO:0009507">
    <property type="term" value="C:chloroplast"/>
    <property type="evidence" value="ECO:0007669"/>
    <property type="project" value="UniProtKB-SubCell"/>
</dbReference>
<dbReference type="GO" id="GO:0015935">
    <property type="term" value="C:small ribosomal subunit"/>
    <property type="evidence" value="ECO:0007669"/>
    <property type="project" value="InterPro"/>
</dbReference>
<dbReference type="GO" id="GO:0019843">
    <property type="term" value="F:rRNA binding"/>
    <property type="evidence" value="ECO:0007669"/>
    <property type="project" value="UniProtKB-UniRule"/>
</dbReference>
<dbReference type="GO" id="GO:0003735">
    <property type="term" value="F:structural constituent of ribosome"/>
    <property type="evidence" value="ECO:0007669"/>
    <property type="project" value="InterPro"/>
</dbReference>
<dbReference type="GO" id="GO:0006412">
    <property type="term" value="P:translation"/>
    <property type="evidence" value="ECO:0007669"/>
    <property type="project" value="UniProtKB-UniRule"/>
</dbReference>
<dbReference type="CDD" id="cd14871">
    <property type="entry name" value="uS7_Chloroplast"/>
    <property type="match status" value="1"/>
</dbReference>
<dbReference type="FunFam" id="1.10.455.10:FF:000001">
    <property type="entry name" value="30S ribosomal protein S7"/>
    <property type="match status" value="1"/>
</dbReference>
<dbReference type="Gene3D" id="1.10.455.10">
    <property type="entry name" value="Ribosomal protein S7 domain"/>
    <property type="match status" value="1"/>
</dbReference>
<dbReference type="HAMAP" id="MF_00480_B">
    <property type="entry name" value="Ribosomal_uS7_B"/>
    <property type="match status" value="1"/>
</dbReference>
<dbReference type="InterPro" id="IPR000235">
    <property type="entry name" value="Ribosomal_uS7"/>
</dbReference>
<dbReference type="InterPro" id="IPR005717">
    <property type="entry name" value="Ribosomal_uS7_bac/org-type"/>
</dbReference>
<dbReference type="InterPro" id="IPR020606">
    <property type="entry name" value="Ribosomal_uS7_CS"/>
</dbReference>
<dbReference type="InterPro" id="IPR023798">
    <property type="entry name" value="Ribosomal_uS7_dom"/>
</dbReference>
<dbReference type="InterPro" id="IPR036823">
    <property type="entry name" value="Ribosomal_uS7_dom_sf"/>
</dbReference>
<dbReference type="NCBIfam" id="TIGR01029">
    <property type="entry name" value="rpsG_bact"/>
    <property type="match status" value="1"/>
</dbReference>
<dbReference type="PANTHER" id="PTHR11205">
    <property type="entry name" value="RIBOSOMAL PROTEIN S7"/>
    <property type="match status" value="1"/>
</dbReference>
<dbReference type="Pfam" id="PF00177">
    <property type="entry name" value="Ribosomal_S7"/>
    <property type="match status" value="1"/>
</dbReference>
<dbReference type="PIRSF" id="PIRSF002122">
    <property type="entry name" value="RPS7p_RPS7a_RPS5e_RPS7o"/>
    <property type="match status" value="1"/>
</dbReference>
<dbReference type="SUPFAM" id="SSF47973">
    <property type="entry name" value="Ribosomal protein S7"/>
    <property type="match status" value="1"/>
</dbReference>
<dbReference type="PROSITE" id="PS00052">
    <property type="entry name" value="RIBOSOMAL_S7"/>
    <property type="match status" value="1"/>
</dbReference>
<feature type="chain" id="PRO_0000124446" description="Small ribosomal subunit protein uS7c">
    <location>
        <begin position="1"/>
        <end position="155"/>
    </location>
</feature>
<accession>Q6EMA2</accession>
<reference key="1">
    <citation type="submission" date="2003-02" db="EMBL/GenBank/DDBJ databases">
        <title>Parsing out signal and noise for seed-plant phylogenetic inference.</title>
        <authorList>
            <person name="Graham S.W."/>
            <person name="Rai H.S."/>
            <person name="Ikegami K."/>
            <person name="Reeves P.A."/>
            <person name="Olmstead R.G."/>
        </authorList>
    </citation>
    <scope>NUCLEOTIDE SEQUENCE [GENOMIC DNA]</scope>
</reference>
<evidence type="ECO:0000250" key="1"/>
<evidence type="ECO:0000305" key="2"/>
<proteinExistence type="inferred from homology"/>
<comment type="function">
    <text evidence="1">One of the primary rRNA binding proteins, it binds directly to 16S rRNA where it nucleates assembly of the head domain of the 30S subunit.</text>
</comment>
<comment type="subunit">
    <text>Part of the 30S ribosomal subunit.</text>
</comment>
<comment type="subcellular location">
    <subcellularLocation>
        <location>Plastid</location>
        <location>Chloroplast</location>
    </subcellularLocation>
</comment>
<comment type="similarity">
    <text evidence="2">Belongs to the universal ribosomal protein uS7 family.</text>
</comment>
<organism>
    <name type="scientific">Cornus mas</name>
    <name type="common">Cornelian cherry dogwood</name>
    <dbReference type="NCBI Taxonomy" id="4285"/>
    <lineage>
        <taxon>Eukaryota</taxon>
        <taxon>Viridiplantae</taxon>
        <taxon>Streptophyta</taxon>
        <taxon>Embryophyta</taxon>
        <taxon>Tracheophyta</taxon>
        <taxon>Spermatophyta</taxon>
        <taxon>Magnoliopsida</taxon>
        <taxon>eudicotyledons</taxon>
        <taxon>Gunneridae</taxon>
        <taxon>Pentapetalae</taxon>
        <taxon>asterids</taxon>
        <taxon>Cornales</taxon>
        <taxon>Cornaceae</taxon>
        <taxon>Cornus</taxon>
    </lineage>
</organism>
<protein>
    <recommendedName>
        <fullName evidence="2">Small ribosomal subunit protein uS7c</fullName>
    </recommendedName>
    <alternativeName>
        <fullName>30S ribosomal protein S7, chloroplastic</fullName>
    </alternativeName>
</protein>
<geneLocation type="chloroplast"/>
<sequence length="155" mass="17357">MSRRGTAEEKTAKSDPIYRNRLVNMLVNRILKHGKKSLAYQILYRAVKKIQQKTETNPLSVLRQAIRGVTPDIAVKARRVGGSTHQVPIEIGSTQGKALAIRWLLAASRKRPGRNMAFKLSSELVDAAKGSGDAIRKKEETHRMAEANRAFAHFR</sequence>
<gene>
    <name type="primary">rps7</name>
</gene>
<name>RR7_CORMA</name>
<keyword id="KW-0150">Chloroplast</keyword>
<keyword id="KW-0934">Plastid</keyword>
<keyword id="KW-0687">Ribonucleoprotein</keyword>
<keyword id="KW-0689">Ribosomal protein</keyword>
<keyword id="KW-0694">RNA-binding</keyword>
<keyword id="KW-0699">rRNA-binding</keyword>